<keyword id="KW-0067">ATP-binding</keyword>
<keyword id="KW-0173">Coenzyme A biosynthesis</keyword>
<keyword id="KW-0963">Cytoplasm</keyword>
<keyword id="KW-0418">Kinase</keyword>
<keyword id="KW-0547">Nucleotide-binding</keyword>
<keyword id="KW-0630">Potassium</keyword>
<keyword id="KW-1185">Reference proteome</keyword>
<keyword id="KW-0808">Transferase</keyword>
<protein>
    <recommendedName>
        <fullName evidence="1">Type III pantothenate kinase</fullName>
        <ecNumber evidence="1">2.7.1.33</ecNumber>
    </recommendedName>
    <alternativeName>
        <fullName evidence="1">PanK-III</fullName>
    </alternativeName>
    <alternativeName>
        <fullName evidence="1">Pantothenic acid kinase</fullName>
    </alternativeName>
</protein>
<comment type="function">
    <text evidence="1">Catalyzes the phosphorylation of pantothenate (Pan), the first step in CoA biosynthesis.</text>
</comment>
<comment type="catalytic activity">
    <reaction evidence="1">
        <text>(R)-pantothenate + ATP = (R)-4'-phosphopantothenate + ADP + H(+)</text>
        <dbReference type="Rhea" id="RHEA:16373"/>
        <dbReference type="ChEBI" id="CHEBI:10986"/>
        <dbReference type="ChEBI" id="CHEBI:15378"/>
        <dbReference type="ChEBI" id="CHEBI:29032"/>
        <dbReference type="ChEBI" id="CHEBI:30616"/>
        <dbReference type="ChEBI" id="CHEBI:456216"/>
        <dbReference type="EC" id="2.7.1.33"/>
    </reaction>
</comment>
<comment type="cofactor">
    <cofactor evidence="1">
        <name>NH4(+)</name>
        <dbReference type="ChEBI" id="CHEBI:28938"/>
    </cofactor>
    <cofactor evidence="1">
        <name>K(+)</name>
        <dbReference type="ChEBI" id="CHEBI:29103"/>
    </cofactor>
    <text evidence="1">A monovalent cation. Ammonium or potassium.</text>
</comment>
<comment type="pathway">
    <text evidence="1">Cofactor biosynthesis; coenzyme A biosynthesis; CoA from (R)-pantothenate: step 1/5.</text>
</comment>
<comment type="subunit">
    <text evidence="1">Homodimer.</text>
</comment>
<comment type="subcellular location">
    <subcellularLocation>
        <location evidence="1">Cytoplasm</location>
    </subcellularLocation>
</comment>
<comment type="similarity">
    <text evidence="1">Belongs to the type III pantothenate kinase family.</text>
</comment>
<feature type="chain" id="PRO_0000270897" description="Type III pantothenate kinase">
    <location>
        <begin position="1"/>
        <end position="255"/>
    </location>
</feature>
<feature type="active site" description="Proton acceptor" evidence="1">
    <location>
        <position position="105"/>
    </location>
</feature>
<feature type="binding site" evidence="1">
    <location>
        <begin position="7"/>
        <end position="14"/>
    </location>
    <ligand>
        <name>ATP</name>
        <dbReference type="ChEBI" id="CHEBI:30616"/>
    </ligand>
</feature>
<feature type="binding site" evidence="1">
    <location>
        <position position="96"/>
    </location>
    <ligand>
        <name>substrate</name>
    </ligand>
</feature>
<feature type="binding site" evidence="1">
    <location>
        <begin position="103"/>
        <end position="106"/>
    </location>
    <ligand>
        <name>substrate</name>
    </ligand>
</feature>
<feature type="binding site" evidence="1">
    <location>
        <position position="133"/>
    </location>
    <ligand>
        <name>ATP</name>
        <dbReference type="ChEBI" id="CHEBI:30616"/>
    </ligand>
</feature>
<feature type="binding site" evidence="1">
    <location>
        <position position="183"/>
    </location>
    <ligand>
        <name>substrate</name>
    </ligand>
</feature>
<accession>Q21SD6</accession>
<reference key="1">
    <citation type="submission" date="2006-02" db="EMBL/GenBank/DDBJ databases">
        <title>Complete sequence of chromosome of Rhodoferax ferrireducens DSM 15236.</title>
        <authorList>
            <person name="Copeland A."/>
            <person name="Lucas S."/>
            <person name="Lapidus A."/>
            <person name="Barry K."/>
            <person name="Detter J.C."/>
            <person name="Glavina del Rio T."/>
            <person name="Hammon N."/>
            <person name="Israni S."/>
            <person name="Pitluck S."/>
            <person name="Brettin T."/>
            <person name="Bruce D."/>
            <person name="Han C."/>
            <person name="Tapia R."/>
            <person name="Gilna P."/>
            <person name="Kiss H."/>
            <person name="Schmutz J."/>
            <person name="Larimer F."/>
            <person name="Land M."/>
            <person name="Kyrpides N."/>
            <person name="Ivanova N."/>
            <person name="Richardson P."/>
        </authorList>
    </citation>
    <scope>NUCLEOTIDE SEQUENCE [LARGE SCALE GENOMIC DNA]</scope>
    <source>
        <strain>ATCC BAA-621 / DSM 15236 / T118</strain>
    </source>
</reference>
<proteinExistence type="inferred from homology"/>
<sequence>MTFLAIDVGNTRLKWALYTHPHRDAPLLAQGAEFLDNIDKLADGAWATLTPPTHMLGCIVAGDAVRRRVEAQMELWDVAPQWVVASAGEAGLTNGYDYPARLGADRWVAMIGAWHHAFSTGPARPLVVVMVGTAVTVDAIDASGKFLGGLILPGHGIMLRALESGTAGLHVPTGEVREFPTNTSDALTSGGTFAIAGAVNCMVQHLRDHCGTEPKCIMAGGAGWKMAPSMSVQFELVDNLIFDGLLEMAARRFID</sequence>
<name>COAX_ALBFT</name>
<organism>
    <name type="scientific">Albidiferax ferrireducens (strain ATCC BAA-621 / DSM 15236 / T118)</name>
    <name type="common">Rhodoferax ferrireducens</name>
    <dbReference type="NCBI Taxonomy" id="338969"/>
    <lineage>
        <taxon>Bacteria</taxon>
        <taxon>Pseudomonadati</taxon>
        <taxon>Pseudomonadota</taxon>
        <taxon>Betaproteobacteria</taxon>
        <taxon>Burkholderiales</taxon>
        <taxon>Comamonadaceae</taxon>
        <taxon>Rhodoferax</taxon>
    </lineage>
</organism>
<evidence type="ECO:0000255" key="1">
    <source>
        <dbReference type="HAMAP-Rule" id="MF_01274"/>
    </source>
</evidence>
<gene>
    <name evidence="1" type="primary">coaX</name>
    <name type="ordered locus">Rfer_3614</name>
</gene>
<dbReference type="EC" id="2.7.1.33" evidence="1"/>
<dbReference type="EMBL" id="CP000267">
    <property type="protein sequence ID" value="ABD71317.1"/>
    <property type="molecule type" value="Genomic_DNA"/>
</dbReference>
<dbReference type="RefSeq" id="WP_011465880.1">
    <property type="nucleotide sequence ID" value="NC_007908.1"/>
</dbReference>
<dbReference type="SMR" id="Q21SD6"/>
<dbReference type="STRING" id="338969.Rfer_3614"/>
<dbReference type="KEGG" id="rfr:Rfer_3614"/>
<dbReference type="eggNOG" id="COG1521">
    <property type="taxonomic scope" value="Bacteria"/>
</dbReference>
<dbReference type="HOGENOM" id="CLU_066627_0_0_4"/>
<dbReference type="OrthoDB" id="9781305at2"/>
<dbReference type="UniPathway" id="UPA00241">
    <property type="reaction ID" value="UER00352"/>
</dbReference>
<dbReference type="Proteomes" id="UP000008332">
    <property type="component" value="Chromosome"/>
</dbReference>
<dbReference type="GO" id="GO:0005737">
    <property type="term" value="C:cytoplasm"/>
    <property type="evidence" value="ECO:0007669"/>
    <property type="project" value="UniProtKB-SubCell"/>
</dbReference>
<dbReference type="GO" id="GO:0005524">
    <property type="term" value="F:ATP binding"/>
    <property type="evidence" value="ECO:0007669"/>
    <property type="project" value="UniProtKB-UniRule"/>
</dbReference>
<dbReference type="GO" id="GO:0004594">
    <property type="term" value="F:pantothenate kinase activity"/>
    <property type="evidence" value="ECO:0007669"/>
    <property type="project" value="UniProtKB-UniRule"/>
</dbReference>
<dbReference type="GO" id="GO:0015937">
    <property type="term" value="P:coenzyme A biosynthetic process"/>
    <property type="evidence" value="ECO:0007669"/>
    <property type="project" value="UniProtKB-UniRule"/>
</dbReference>
<dbReference type="CDD" id="cd24015">
    <property type="entry name" value="ASKHA_NBD_PanK-III"/>
    <property type="match status" value="1"/>
</dbReference>
<dbReference type="Gene3D" id="3.30.420.40">
    <property type="match status" value="2"/>
</dbReference>
<dbReference type="HAMAP" id="MF_01274">
    <property type="entry name" value="Pantothen_kinase_3"/>
    <property type="match status" value="1"/>
</dbReference>
<dbReference type="InterPro" id="IPR043129">
    <property type="entry name" value="ATPase_NBD"/>
</dbReference>
<dbReference type="InterPro" id="IPR004619">
    <property type="entry name" value="Type_III_PanK"/>
</dbReference>
<dbReference type="NCBIfam" id="TIGR00671">
    <property type="entry name" value="baf"/>
    <property type="match status" value="1"/>
</dbReference>
<dbReference type="PANTHER" id="PTHR34265">
    <property type="entry name" value="TYPE III PANTOTHENATE KINASE"/>
    <property type="match status" value="1"/>
</dbReference>
<dbReference type="PANTHER" id="PTHR34265:SF1">
    <property type="entry name" value="TYPE III PANTOTHENATE KINASE"/>
    <property type="match status" value="1"/>
</dbReference>
<dbReference type="Pfam" id="PF03309">
    <property type="entry name" value="Pan_kinase"/>
    <property type="match status" value="1"/>
</dbReference>
<dbReference type="SUPFAM" id="SSF53067">
    <property type="entry name" value="Actin-like ATPase domain"/>
    <property type="match status" value="2"/>
</dbReference>